<protein>
    <recommendedName>
        <fullName evidence="1">Succinylglutamate desuccinylase</fullName>
        <ecNumber evidence="1">3.5.1.96</ecNumber>
    </recommendedName>
</protein>
<organism>
    <name type="scientific">Salmonella newport (strain SL254)</name>
    <dbReference type="NCBI Taxonomy" id="423368"/>
    <lineage>
        <taxon>Bacteria</taxon>
        <taxon>Pseudomonadati</taxon>
        <taxon>Pseudomonadota</taxon>
        <taxon>Gammaproteobacteria</taxon>
        <taxon>Enterobacterales</taxon>
        <taxon>Enterobacteriaceae</taxon>
        <taxon>Salmonella</taxon>
    </lineage>
</organism>
<evidence type="ECO:0000255" key="1">
    <source>
        <dbReference type="HAMAP-Rule" id="MF_00767"/>
    </source>
</evidence>
<proteinExistence type="inferred from homology"/>
<name>ASTE_SALNS</name>
<accession>B4T4K3</accession>
<sequence>MDNFLALTLSGTTPRVRQGKSAGFRWRWLGHGLLELTPDAPVDRALILSAGIHGNETAPVEMLDKLLSALYSGSLTLTWRVLVVLGNPQALAAGIRYCHSDMNRMFGGRWQSFAESDETRRARELELSLETFFSSGQARVRWHLDLHTAIRGSHHLRFGVLPQRDRPWEADFLAWLGAAGLEALVFHQAPGGTFTHFSSEHFGALSCTLELGKALPFGQNDLTQFSVTSQALSALLSGVETSTSSSPPLRYRVVSQITRHSDKFALYMDAQTLNFTAFAKGTLLAEEGDKRVTVTHDVEYVLFPNPAVACGLRAGLMLERLP</sequence>
<gene>
    <name evidence="1" type="primary">astE</name>
    <name type="ordered locus">SNSL254_A1419</name>
</gene>
<feature type="chain" id="PRO_1000133643" description="Succinylglutamate desuccinylase">
    <location>
        <begin position="1"/>
        <end position="322"/>
    </location>
</feature>
<feature type="active site" evidence="1">
    <location>
        <position position="210"/>
    </location>
</feature>
<feature type="binding site" evidence="1">
    <location>
        <position position="53"/>
    </location>
    <ligand>
        <name>Zn(2+)</name>
        <dbReference type="ChEBI" id="CHEBI:29105"/>
    </ligand>
</feature>
<feature type="binding site" evidence="1">
    <location>
        <position position="56"/>
    </location>
    <ligand>
        <name>Zn(2+)</name>
        <dbReference type="ChEBI" id="CHEBI:29105"/>
    </ligand>
</feature>
<feature type="binding site" evidence="1">
    <location>
        <position position="147"/>
    </location>
    <ligand>
        <name>Zn(2+)</name>
        <dbReference type="ChEBI" id="CHEBI:29105"/>
    </ligand>
</feature>
<keyword id="KW-0056">Arginine metabolism</keyword>
<keyword id="KW-0378">Hydrolase</keyword>
<keyword id="KW-0479">Metal-binding</keyword>
<keyword id="KW-0862">Zinc</keyword>
<dbReference type="EC" id="3.5.1.96" evidence="1"/>
<dbReference type="EMBL" id="CP001113">
    <property type="protein sequence ID" value="ACF63325.1"/>
    <property type="molecule type" value="Genomic_DNA"/>
</dbReference>
<dbReference type="RefSeq" id="WP_000368442.1">
    <property type="nucleotide sequence ID" value="NZ_CCMR01000003.1"/>
</dbReference>
<dbReference type="SMR" id="B4T4K3"/>
<dbReference type="KEGG" id="see:SNSL254_A1419"/>
<dbReference type="HOGENOM" id="CLU_071608_0_0_6"/>
<dbReference type="UniPathway" id="UPA00185">
    <property type="reaction ID" value="UER00283"/>
</dbReference>
<dbReference type="Proteomes" id="UP000008824">
    <property type="component" value="Chromosome"/>
</dbReference>
<dbReference type="GO" id="GO:0016788">
    <property type="term" value="F:hydrolase activity, acting on ester bonds"/>
    <property type="evidence" value="ECO:0007669"/>
    <property type="project" value="UniProtKB-UniRule"/>
</dbReference>
<dbReference type="GO" id="GO:0009017">
    <property type="term" value="F:succinylglutamate desuccinylase activity"/>
    <property type="evidence" value="ECO:0007669"/>
    <property type="project" value="UniProtKB-EC"/>
</dbReference>
<dbReference type="GO" id="GO:0008270">
    <property type="term" value="F:zinc ion binding"/>
    <property type="evidence" value="ECO:0007669"/>
    <property type="project" value="UniProtKB-UniRule"/>
</dbReference>
<dbReference type="GO" id="GO:0019544">
    <property type="term" value="P:arginine catabolic process to glutamate"/>
    <property type="evidence" value="ECO:0007669"/>
    <property type="project" value="UniProtKB-UniRule"/>
</dbReference>
<dbReference type="GO" id="GO:0019545">
    <property type="term" value="P:arginine catabolic process to succinate"/>
    <property type="evidence" value="ECO:0007669"/>
    <property type="project" value="UniProtKB-UniRule"/>
</dbReference>
<dbReference type="CDD" id="cd03855">
    <property type="entry name" value="M14_ASTE"/>
    <property type="match status" value="1"/>
</dbReference>
<dbReference type="FunFam" id="3.40.630.10:FF:000017">
    <property type="entry name" value="Succinylglutamate desuccinylase"/>
    <property type="match status" value="1"/>
</dbReference>
<dbReference type="Gene3D" id="3.40.630.10">
    <property type="entry name" value="Zn peptidases"/>
    <property type="match status" value="1"/>
</dbReference>
<dbReference type="HAMAP" id="MF_00767">
    <property type="entry name" value="Arg_catab_AstE"/>
    <property type="match status" value="1"/>
</dbReference>
<dbReference type="InterPro" id="IPR050178">
    <property type="entry name" value="AspA/AstE_fam"/>
</dbReference>
<dbReference type="InterPro" id="IPR055438">
    <property type="entry name" value="AstE_AspA_cat"/>
</dbReference>
<dbReference type="InterPro" id="IPR007036">
    <property type="entry name" value="Aste_AspA_hybrid_dom"/>
</dbReference>
<dbReference type="InterPro" id="IPR016681">
    <property type="entry name" value="SuccinylGlu_desuccinylase"/>
</dbReference>
<dbReference type="NCBIfam" id="TIGR03242">
    <property type="entry name" value="arg_catab_astE"/>
    <property type="match status" value="1"/>
</dbReference>
<dbReference type="NCBIfam" id="NF003706">
    <property type="entry name" value="PRK05324.1"/>
    <property type="match status" value="1"/>
</dbReference>
<dbReference type="PANTHER" id="PTHR15162">
    <property type="entry name" value="ASPARTOACYLASE"/>
    <property type="match status" value="1"/>
</dbReference>
<dbReference type="PANTHER" id="PTHR15162:SF7">
    <property type="entry name" value="SUCCINYLGLUTAMATE DESUCCINYLASE"/>
    <property type="match status" value="1"/>
</dbReference>
<dbReference type="Pfam" id="PF24827">
    <property type="entry name" value="AstE_AspA_cat"/>
    <property type="match status" value="1"/>
</dbReference>
<dbReference type="Pfam" id="PF04952">
    <property type="entry name" value="AstE_AspA_hybrid"/>
    <property type="match status" value="1"/>
</dbReference>
<dbReference type="PIRSF" id="PIRSF017020">
    <property type="entry name" value="AstE"/>
    <property type="match status" value="1"/>
</dbReference>
<dbReference type="SUPFAM" id="SSF53187">
    <property type="entry name" value="Zn-dependent exopeptidases"/>
    <property type="match status" value="1"/>
</dbReference>
<comment type="function">
    <text evidence="1">Transforms N(2)-succinylglutamate into succinate and glutamate.</text>
</comment>
<comment type="catalytic activity">
    <reaction evidence="1">
        <text>N-succinyl-L-glutamate + H2O = L-glutamate + succinate</text>
        <dbReference type="Rhea" id="RHEA:15169"/>
        <dbReference type="ChEBI" id="CHEBI:15377"/>
        <dbReference type="ChEBI" id="CHEBI:29985"/>
        <dbReference type="ChEBI" id="CHEBI:30031"/>
        <dbReference type="ChEBI" id="CHEBI:58763"/>
        <dbReference type="EC" id="3.5.1.96"/>
    </reaction>
</comment>
<comment type="cofactor">
    <cofactor evidence="1">
        <name>Zn(2+)</name>
        <dbReference type="ChEBI" id="CHEBI:29105"/>
    </cofactor>
    <text evidence="1">Binds 1 zinc ion per subunit.</text>
</comment>
<comment type="pathway">
    <text evidence="1">Amino-acid degradation; L-arginine degradation via AST pathway; L-glutamate and succinate from L-arginine: step 5/5.</text>
</comment>
<comment type="similarity">
    <text evidence="1">Belongs to the AspA/AstE family. Succinylglutamate desuccinylase subfamily.</text>
</comment>
<reference key="1">
    <citation type="journal article" date="2011" name="J. Bacteriol.">
        <title>Comparative genomics of 28 Salmonella enterica isolates: evidence for CRISPR-mediated adaptive sublineage evolution.</title>
        <authorList>
            <person name="Fricke W.F."/>
            <person name="Mammel M.K."/>
            <person name="McDermott P.F."/>
            <person name="Tartera C."/>
            <person name="White D.G."/>
            <person name="Leclerc J.E."/>
            <person name="Ravel J."/>
            <person name="Cebula T.A."/>
        </authorList>
    </citation>
    <scope>NUCLEOTIDE SEQUENCE [LARGE SCALE GENOMIC DNA]</scope>
    <source>
        <strain>SL254</strain>
    </source>
</reference>